<accession>A1JP96</accession>
<gene>
    <name evidence="1" type="primary">xni</name>
    <name evidence="1" type="synonym">ygdG</name>
    <name type="ordered locus">YE3297</name>
</gene>
<organism>
    <name type="scientific">Yersinia enterocolitica serotype O:8 / biotype 1B (strain NCTC 13174 / 8081)</name>
    <dbReference type="NCBI Taxonomy" id="393305"/>
    <lineage>
        <taxon>Bacteria</taxon>
        <taxon>Pseudomonadati</taxon>
        <taxon>Pseudomonadota</taxon>
        <taxon>Gammaproteobacteria</taxon>
        <taxon>Enterobacterales</taxon>
        <taxon>Yersiniaceae</taxon>
        <taxon>Yersinia</taxon>
    </lineage>
</organism>
<proteinExistence type="inferred from homology"/>
<reference key="1">
    <citation type="journal article" date="2006" name="PLoS Genet.">
        <title>The complete genome sequence and comparative genome analysis of the high pathogenicity Yersinia enterocolitica strain 8081.</title>
        <authorList>
            <person name="Thomson N.R."/>
            <person name="Howard S."/>
            <person name="Wren B.W."/>
            <person name="Holden M.T.G."/>
            <person name="Crossman L."/>
            <person name="Challis G.L."/>
            <person name="Churcher C."/>
            <person name="Mungall K."/>
            <person name="Brooks K."/>
            <person name="Chillingworth T."/>
            <person name="Feltwell T."/>
            <person name="Abdellah Z."/>
            <person name="Hauser H."/>
            <person name="Jagels K."/>
            <person name="Maddison M."/>
            <person name="Moule S."/>
            <person name="Sanders M."/>
            <person name="Whitehead S."/>
            <person name="Quail M.A."/>
            <person name="Dougan G."/>
            <person name="Parkhill J."/>
            <person name="Prentice M.B."/>
        </authorList>
    </citation>
    <scope>NUCLEOTIDE SEQUENCE [LARGE SCALE GENOMIC DNA]</scope>
    <source>
        <strain>NCTC 13174 / 8081</strain>
    </source>
</reference>
<feature type="chain" id="PRO_0000297892" description="Flap endonuclease Xni">
    <location>
        <begin position="1"/>
        <end position="251"/>
    </location>
</feature>
<feature type="domain" description="5'-3' exonuclease" evidence="1">
    <location>
        <begin position="160"/>
        <end position="249"/>
    </location>
</feature>
<feature type="region of interest" description="Disordered" evidence="2">
    <location>
        <begin position="51"/>
        <end position="72"/>
    </location>
</feature>
<feature type="region of interest" description="Interaction with DNA" evidence="1">
    <location>
        <begin position="184"/>
        <end position="189"/>
    </location>
</feature>
<feature type="binding site" evidence="1">
    <location>
        <position position="104"/>
    </location>
    <ligand>
        <name>Mg(2+)</name>
        <dbReference type="ChEBI" id="CHEBI:18420"/>
    </ligand>
</feature>
<feature type="binding site" evidence="1">
    <location>
        <position position="171"/>
    </location>
    <ligand>
        <name>K(+)</name>
        <dbReference type="ChEBI" id="CHEBI:29103"/>
    </ligand>
</feature>
<feature type="binding site" evidence="1">
    <location>
        <position position="172"/>
    </location>
    <ligand>
        <name>K(+)</name>
        <dbReference type="ChEBI" id="CHEBI:29103"/>
    </ligand>
</feature>
<feature type="binding site" evidence="1">
    <location>
        <position position="180"/>
    </location>
    <ligand>
        <name>K(+)</name>
        <dbReference type="ChEBI" id="CHEBI:29103"/>
    </ligand>
</feature>
<feature type="binding site" evidence="1">
    <location>
        <position position="182"/>
    </location>
    <ligand>
        <name>K(+)</name>
        <dbReference type="ChEBI" id="CHEBI:29103"/>
    </ligand>
</feature>
<feature type="binding site" evidence="1">
    <location>
        <position position="185"/>
    </location>
    <ligand>
        <name>K(+)</name>
        <dbReference type="ChEBI" id="CHEBI:29103"/>
    </ligand>
</feature>
<dbReference type="EC" id="3.1.-.-" evidence="1"/>
<dbReference type="EMBL" id="AM286415">
    <property type="protein sequence ID" value="CAL13327.1"/>
    <property type="molecule type" value="Genomic_DNA"/>
</dbReference>
<dbReference type="RefSeq" id="WP_011816971.1">
    <property type="nucleotide sequence ID" value="NC_008800.1"/>
</dbReference>
<dbReference type="RefSeq" id="YP_001007471.1">
    <property type="nucleotide sequence ID" value="NC_008800.1"/>
</dbReference>
<dbReference type="SMR" id="A1JP96"/>
<dbReference type="KEGG" id="yen:YE3297"/>
<dbReference type="PATRIC" id="fig|393305.7.peg.3507"/>
<dbReference type="eggNOG" id="COG0258">
    <property type="taxonomic scope" value="Bacteria"/>
</dbReference>
<dbReference type="HOGENOM" id="CLU_004675_1_2_6"/>
<dbReference type="OrthoDB" id="8070997at2"/>
<dbReference type="Proteomes" id="UP000000642">
    <property type="component" value="Chromosome"/>
</dbReference>
<dbReference type="GO" id="GO:0008409">
    <property type="term" value="F:5'-3' exonuclease activity"/>
    <property type="evidence" value="ECO:0007669"/>
    <property type="project" value="InterPro"/>
</dbReference>
<dbReference type="GO" id="GO:0017108">
    <property type="term" value="F:5'-flap endonuclease activity"/>
    <property type="evidence" value="ECO:0007669"/>
    <property type="project" value="UniProtKB-UniRule"/>
</dbReference>
<dbReference type="GO" id="GO:0003677">
    <property type="term" value="F:DNA binding"/>
    <property type="evidence" value="ECO:0007669"/>
    <property type="project" value="UniProtKB-UniRule"/>
</dbReference>
<dbReference type="GO" id="GO:0000287">
    <property type="term" value="F:magnesium ion binding"/>
    <property type="evidence" value="ECO:0007669"/>
    <property type="project" value="UniProtKB-UniRule"/>
</dbReference>
<dbReference type="GO" id="GO:0030955">
    <property type="term" value="F:potassium ion binding"/>
    <property type="evidence" value="ECO:0007669"/>
    <property type="project" value="UniProtKB-UniRule"/>
</dbReference>
<dbReference type="GO" id="GO:0033567">
    <property type="term" value="P:DNA replication, Okazaki fragment processing"/>
    <property type="evidence" value="ECO:0007669"/>
    <property type="project" value="UniProtKB-UniRule"/>
</dbReference>
<dbReference type="CDD" id="cd09898">
    <property type="entry name" value="H3TH_53EXO"/>
    <property type="match status" value="1"/>
</dbReference>
<dbReference type="CDD" id="cd09859">
    <property type="entry name" value="PIN_53EXO"/>
    <property type="match status" value="1"/>
</dbReference>
<dbReference type="FunFam" id="1.10.150.20:FF:000003">
    <property type="entry name" value="DNA polymerase I"/>
    <property type="match status" value="1"/>
</dbReference>
<dbReference type="FunFam" id="3.40.50.1010:FF:000011">
    <property type="entry name" value="Flap endonuclease Xni"/>
    <property type="match status" value="1"/>
</dbReference>
<dbReference type="Gene3D" id="1.10.150.20">
    <property type="entry name" value="5' to 3' exonuclease, C-terminal subdomain"/>
    <property type="match status" value="1"/>
</dbReference>
<dbReference type="Gene3D" id="3.40.50.1010">
    <property type="entry name" value="5'-nuclease"/>
    <property type="match status" value="1"/>
</dbReference>
<dbReference type="HAMAP" id="MF_01192">
    <property type="entry name" value="Xni"/>
    <property type="match status" value="1"/>
</dbReference>
<dbReference type="InterPro" id="IPR020046">
    <property type="entry name" value="5-3_exonucl_a-hlix_arch_N"/>
</dbReference>
<dbReference type="InterPro" id="IPR002421">
    <property type="entry name" value="5-3_exonuclease"/>
</dbReference>
<dbReference type="InterPro" id="IPR036279">
    <property type="entry name" value="5-3_exonuclease_C_sf"/>
</dbReference>
<dbReference type="InterPro" id="IPR020045">
    <property type="entry name" value="DNA_polI_H3TH"/>
</dbReference>
<dbReference type="InterPro" id="IPR038969">
    <property type="entry name" value="FEN"/>
</dbReference>
<dbReference type="InterPro" id="IPR008918">
    <property type="entry name" value="HhH2"/>
</dbReference>
<dbReference type="InterPro" id="IPR029060">
    <property type="entry name" value="PIN-like_dom_sf"/>
</dbReference>
<dbReference type="InterPro" id="IPR022895">
    <property type="entry name" value="Xni"/>
</dbReference>
<dbReference type="NCBIfam" id="NF007017">
    <property type="entry name" value="PRK09482.1"/>
    <property type="match status" value="1"/>
</dbReference>
<dbReference type="PANTHER" id="PTHR42646:SF2">
    <property type="entry name" value="5'-3' EXONUCLEASE FAMILY PROTEIN"/>
    <property type="match status" value="1"/>
</dbReference>
<dbReference type="PANTHER" id="PTHR42646">
    <property type="entry name" value="FLAP ENDONUCLEASE XNI"/>
    <property type="match status" value="1"/>
</dbReference>
<dbReference type="Pfam" id="PF01367">
    <property type="entry name" value="5_3_exonuc"/>
    <property type="match status" value="1"/>
</dbReference>
<dbReference type="Pfam" id="PF02739">
    <property type="entry name" value="5_3_exonuc_N"/>
    <property type="match status" value="1"/>
</dbReference>
<dbReference type="SMART" id="SM00475">
    <property type="entry name" value="53EXOc"/>
    <property type="match status" value="1"/>
</dbReference>
<dbReference type="SMART" id="SM00279">
    <property type="entry name" value="HhH2"/>
    <property type="match status" value="1"/>
</dbReference>
<dbReference type="SUPFAM" id="SSF47807">
    <property type="entry name" value="5' to 3' exonuclease, C-terminal subdomain"/>
    <property type="match status" value="1"/>
</dbReference>
<dbReference type="SUPFAM" id="SSF88723">
    <property type="entry name" value="PIN domain-like"/>
    <property type="match status" value="1"/>
</dbReference>
<comment type="function">
    <text evidence="1">Has flap endonuclease activity. During DNA replication, flap endonucleases cleave the 5'-overhanging flap structure that is generated by displacement synthesis when DNA polymerase encounters the 5'-end of a downstream Okazaki fragment.</text>
</comment>
<comment type="cofactor">
    <cofactor evidence="1">
        <name>Mg(2+)</name>
        <dbReference type="ChEBI" id="CHEBI:18420"/>
    </cofactor>
    <text evidence="1">Binds 2 Mg(2+) per subunit. Only one magnesium ion has a direct interaction with the protein, the other interactions are indirect.</text>
</comment>
<comment type="cofactor">
    <cofactor evidence="1">
        <name>K(+)</name>
        <dbReference type="ChEBI" id="CHEBI:29103"/>
    </cofactor>
    <text evidence="1">Binds 1 K(+) per subunit. The potassium ion strongly increases the affinity for DNA.</text>
</comment>
<comment type="similarity">
    <text evidence="1">Belongs to the Xni family.</text>
</comment>
<protein>
    <recommendedName>
        <fullName evidence="1">Flap endonuclease Xni</fullName>
        <shortName evidence="1">FEN</shortName>
        <ecNumber evidence="1">3.1.-.-</ecNumber>
    </recommendedName>
</protein>
<evidence type="ECO:0000255" key="1">
    <source>
        <dbReference type="HAMAP-Rule" id="MF_01192"/>
    </source>
</evidence>
<evidence type="ECO:0000256" key="2">
    <source>
        <dbReference type="SAM" id="MobiDB-lite"/>
    </source>
</evidence>
<sequence length="251" mass="27937">MQIHLLIVDALNLIRRIHAVQGSPSVNACQHALQQLISHSQPTHAVAVFDEDDRSDSWRHQSLPDYKAGRSPMSDNLQQEMPLIREAFNSLGVNCWSSPGNEADDLAATLAVKIGGAGHQVTIVSTDKGYCQLLAPNVQIRDYFQKRWLDMPFVKQEFGVLPHQLPDYWGLAGISSSKIPGVAGIGAKTAALLLQQASSLEQLYQELDSVPEKWRKKLQQHQEMAFICKQIATLKTDLPLSGNLQQLRLNR</sequence>
<keyword id="KW-0238">DNA-binding</keyword>
<keyword id="KW-0255">Endonuclease</keyword>
<keyword id="KW-0378">Hydrolase</keyword>
<keyword id="KW-0460">Magnesium</keyword>
<keyword id="KW-0479">Metal-binding</keyword>
<keyword id="KW-0540">Nuclease</keyword>
<keyword id="KW-0630">Potassium</keyword>
<name>XNI_YERE8</name>